<sequence length="299" mass="33593">MEEFDSEDFSTSEEDEDYVPSGGEYSEDDVNELVKEDEVDGEEQTQKTQGKKRKAQSIPARKRRQGGLSLEEEEEEDANSESEGSSSEEEDDAAEQEKGIGSEDARKKKEDELWASFLNDVGPKSKVPPSTQVKKGEETEETSSSKLLVKAEELEKPKETEKVKITKVFDFAGEEVRVTKEVDATSKEAKSFFKQNEKEKPQANVPSALPSLPAGSGLKRSSGMSSLLGKIGAKKQKMSTLEKSKLDWESFKEEEGIGEELAIHNRGKEGYIERKAFLDRVDHRQFEIERDLRLSKMKP</sequence>
<gene>
    <name type="primary">CFDP1</name>
    <name type="synonym">BCNT</name>
    <name type="synonym">CENP-29</name>
</gene>
<protein>
    <recommendedName>
        <fullName>Craniofacial development protein 1</fullName>
    </recommendedName>
    <alternativeName>
        <fullName>Bucentaur</fullName>
    </alternativeName>
</protein>
<feature type="chain" id="PRO_0000212494" description="Craniofacial development protein 1">
    <location>
        <begin position="1"/>
        <end position="299"/>
    </location>
</feature>
<feature type="domain" description="BCNT-C" evidence="3">
    <location>
        <begin position="218"/>
        <end position="299"/>
    </location>
</feature>
<feature type="region of interest" description="Disordered" evidence="4">
    <location>
        <begin position="1"/>
        <end position="156"/>
    </location>
</feature>
<feature type="region of interest" description="Hydrophilic">
    <location>
        <begin position="178"/>
        <end position="217"/>
    </location>
</feature>
<feature type="region of interest" description="Disordered" evidence="4">
    <location>
        <begin position="192"/>
        <end position="224"/>
    </location>
</feature>
<feature type="compositionally biased region" description="Acidic residues" evidence="4">
    <location>
        <begin position="1"/>
        <end position="18"/>
    </location>
</feature>
<feature type="compositionally biased region" description="Acidic residues" evidence="4">
    <location>
        <begin position="25"/>
        <end position="43"/>
    </location>
</feature>
<feature type="compositionally biased region" description="Basic residues" evidence="4">
    <location>
        <begin position="49"/>
        <end position="65"/>
    </location>
</feature>
<feature type="compositionally biased region" description="Acidic residues" evidence="4">
    <location>
        <begin position="70"/>
        <end position="94"/>
    </location>
</feature>
<feature type="compositionally biased region" description="Basic and acidic residues" evidence="4">
    <location>
        <begin position="95"/>
        <end position="112"/>
    </location>
</feature>
<feature type="compositionally biased region" description="Basic and acidic residues" evidence="4">
    <location>
        <begin position="192"/>
        <end position="201"/>
    </location>
</feature>
<feature type="modified residue" description="Phosphoserine" evidence="2">
    <location>
        <position position="82"/>
    </location>
</feature>
<feature type="modified residue" description="Phosphoserine" evidence="2">
    <location>
        <position position="85"/>
    </location>
</feature>
<feature type="modified residue" description="Phosphoserine" evidence="2">
    <location>
        <position position="86"/>
    </location>
</feature>
<feature type="modified residue" description="Phosphoserine" evidence="11">
    <location>
        <position position="116"/>
    </location>
</feature>
<feature type="modified residue" description="Phosphoserine" evidence="12">
    <location>
        <position position="216"/>
    </location>
</feature>
<feature type="modified residue" description="N6-methyllysine" evidence="13">
    <location>
        <position position="219"/>
    </location>
</feature>
<feature type="modified residue" description="Phosphoserine" evidence="10">
    <location>
        <position position="250"/>
    </location>
</feature>
<feature type="cross-link" description="Glycyl lysine isopeptide (Lys-Gly) (interchain with G-Cter in SUMO2)" evidence="14">
    <location>
        <position position="150"/>
    </location>
</feature>
<feature type="splice variant" id="VSP_016242" description="In isoform 2." evidence="8">
    <location>
        <begin position="218"/>
        <end position="299"/>
    </location>
</feature>
<feature type="sequence variant" id="VAR_048408" description="In dbSNP:rs16963331.">
    <original>A</original>
    <variation>T</variation>
    <location>
        <position position="60"/>
    </location>
</feature>
<feature type="sequence conflict" description="In Ref. 1; BAA20070." evidence="9" ref="1">
    <original>GE</original>
    <variation>IP</variation>
    <location>
        <begin position="23"/>
        <end position="24"/>
    </location>
</feature>
<reference key="1">
    <citation type="journal article" date="1997" name="J. Biol. Chem.">
        <title>An Alu-linked repetitive sequence corresponding to 280 amino acids is expressed in a novel bovine protein, but not in its human homologue.</title>
        <authorList>
            <person name="Nobukuni T."/>
            <person name="Kobayashi M."/>
            <person name="Omori A."/>
            <person name="Ichinose S."/>
            <person name="Iwanaga T."/>
            <person name="Takahashi I."/>
            <person name="Hashimoto K."/>
            <person name="Hattori S."/>
            <person name="Kaibuchi K."/>
            <person name="Miyata Y."/>
            <person name="Masui T."/>
            <person name="Iwashita S."/>
        </authorList>
    </citation>
    <scope>NUCLEOTIDE SEQUENCE [MRNA] (ISOFORM 2)</scope>
    <scope>NUCLEOTIDE SEQUENCE [MRNA] OF 23-299 (ISOFORM 1)</scope>
    <source>
        <tissue>Brain</tissue>
        <tissue>Placenta</tissue>
    </source>
</reference>
<reference key="2">
    <citation type="journal article" date="1998" name="Gene">
        <title>Existence of a bovine LINE repetitive insert that appears in the cDNA of bovine protein BCNT in ruminant, but not in human, genomes.</title>
        <authorList>
            <person name="Takahashi I."/>
            <person name="Nobukuni T."/>
            <person name="Ohmori H."/>
            <person name="Kobayashi M."/>
            <person name="Tanaka S."/>
            <person name="Ohshima K."/>
            <person name="Okada N."/>
            <person name="Masui T."/>
            <person name="Hashimoto K."/>
            <person name="Iwashita S."/>
        </authorList>
    </citation>
    <scope>NUCLEOTIDE SEQUENCE [MRNA] (ISOFORM 1)</scope>
    <scope>NUCLEOTIDE SEQUENCE [GENOMIC DNA] OF 23-299</scope>
    <scope>TISSUE SPECIFICITY</scope>
</reference>
<reference key="3">
    <citation type="submission" date="2003-08" db="EMBL/GenBank/DDBJ databases">
        <title>Cloning of human full-length CDSs in BD Creator(TM) system donor vector.</title>
        <authorList>
            <person name="Kalnine N."/>
            <person name="Chen X."/>
            <person name="Rolfs A."/>
            <person name="Halleck A."/>
            <person name="Hines L."/>
            <person name="Eisenstein S."/>
            <person name="Koundinya M."/>
            <person name="Raphael J."/>
            <person name="Moreira D."/>
            <person name="Kelley T."/>
            <person name="LaBaer J."/>
            <person name="Lin Y."/>
            <person name="Phelan M."/>
            <person name="Farmer A."/>
        </authorList>
    </citation>
    <scope>NUCLEOTIDE SEQUENCE [LARGE SCALE MRNA] (ISOFORM 1)</scope>
</reference>
<reference key="4">
    <citation type="submission" date="2004-06" db="EMBL/GenBank/DDBJ databases">
        <title>Cloning of human full open reading frames in Gateway(TM) system entry vector (pDONR201).</title>
        <authorList>
            <person name="Ebert L."/>
            <person name="Schick M."/>
            <person name="Neubert P."/>
            <person name="Schatten R."/>
            <person name="Henze S."/>
            <person name="Korn B."/>
        </authorList>
    </citation>
    <scope>NUCLEOTIDE SEQUENCE [LARGE SCALE MRNA] (ISOFORM 1)</scope>
</reference>
<reference key="5">
    <citation type="journal article" date="2004" name="Genome Res.">
        <title>The status, quality, and expansion of the NIH full-length cDNA project: the Mammalian Gene Collection (MGC).</title>
        <authorList>
            <consortium name="The MGC Project Team"/>
        </authorList>
    </citation>
    <scope>NUCLEOTIDE SEQUENCE [LARGE SCALE MRNA] (ISOFORM 1)</scope>
    <source>
        <tissue>Placenta</tissue>
    </source>
</reference>
<reference key="6">
    <citation type="journal article" date="1999" name="Biochim. Biophys. Acta">
        <title>Partial nuclear localization of a bovine phosphoprotein, BCNT, that includes a region derived from a LINE repetitive sequence in Ruminantia.</title>
        <authorList>
            <person name="Iwashita S."/>
            <person name="Nobukuni T."/>
            <person name="Tanaka S."/>
            <person name="Kobayashi M."/>
            <person name="Iwanaga T."/>
            <person name="Tamate H.B."/>
            <person name="Masui T."/>
            <person name="Takahashi I."/>
            <person name="Hashimoto K."/>
        </authorList>
    </citation>
    <scope>PHOSPHORYLATION</scope>
</reference>
<reference key="7">
    <citation type="journal article" date="2008" name="Proc. Natl. Acad. Sci. U.S.A.">
        <title>A quantitative atlas of mitotic phosphorylation.</title>
        <authorList>
            <person name="Dephoure N."/>
            <person name="Zhou C."/>
            <person name="Villen J."/>
            <person name="Beausoleil S.A."/>
            <person name="Bakalarski C.E."/>
            <person name="Elledge S.J."/>
            <person name="Gygi S.P."/>
        </authorList>
    </citation>
    <scope>PHOSPHORYLATION [LARGE SCALE ANALYSIS] AT SER-250</scope>
    <scope>IDENTIFICATION BY MASS SPECTROMETRY [LARGE SCALE ANALYSIS]</scope>
    <source>
        <tissue>Cervix carcinoma</tissue>
    </source>
</reference>
<reference key="8">
    <citation type="journal article" date="2010" name="Cell">
        <title>The protein composition of mitotic chromosomes determined using multiclassifier combinatorial proteomics.</title>
        <authorList>
            <person name="Ohta S."/>
            <person name="Bukowski-Wills J.C."/>
            <person name="Sanchez-Pulido L."/>
            <person name="Alves Fde L."/>
            <person name="Wood L."/>
            <person name="Chen Z.A."/>
            <person name="Platani M."/>
            <person name="Fischer L."/>
            <person name="Hudson D.F."/>
            <person name="Ponting C.P."/>
            <person name="Fukagawa T."/>
            <person name="Earnshaw W.C."/>
            <person name="Rappsilber J."/>
        </authorList>
    </citation>
    <scope>SUBCELLULAR LOCATION</scope>
</reference>
<reference key="9">
    <citation type="journal article" date="2010" name="Sci. Signal.">
        <title>Quantitative phosphoproteomics reveals widespread full phosphorylation site occupancy during mitosis.</title>
        <authorList>
            <person name="Olsen J.V."/>
            <person name="Vermeulen M."/>
            <person name="Santamaria A."/>
            <person name="Kumar C."/>
            <person name="Miller M.L."/>
            <person name="Jensen L.J."/>
            <person name="Gnad F."/>
            <person name="Cox J."/>
            <person name="Jensen T.S."/>
            <person name="Nigg E.A."/>
            <person name="Brunak S."/>
            <person name="Mann M."/>
        </authorList>
    </citation>
    <scope>PHOSPHORYLATION [LARGE SCALE ANALYSIS] AT SER-116</scope>
    <scope>IDENTIFICATION BY MASS SPECTROMETRY [LARGE SCALE ANALYSIS]</scope>
    <source>
        <tissue>Cervix carcinoma</tissue>
    </source>
</reference>
<reference key="10">
    <citation type="journal article" date="2011" name="BMC Syst. Biol.">
        <title>Initial characterization of the human central proteome.</title>
        <authorList>
            <person name="Burkard T.R."/>
            <person name="Planyavsky M."/>
            <person name="Kaupe I."/>
            <person name="Breitwieser F.P."/>
            <person name="Buerckstuemmer T."/>
            <person name="Bennett K.L."/>
            <person name="Superti-Furga G."/>
            <person name="Colinge J."/>
        </authorList>
    </citation>
    <scope>IDENTIFICATION BY MASS SPECTROMETRY [LARGE SCALE ANALYSIS]</scope>
</reference>
<reference key="11">
    <citation type="journal article" date="2013" name="J. Proteome Res.">
        <title>Toward a comprehensive characterization of a human cancer cell phosphoproteome.</title>
        <authorList>
            <person name="Zhou H."/>
            <person name="Di Palma S."/>
            <person name="Preisinger C."/>
            <person name="Peng M."/>
            <person name="Polat A.N."/>
            <person name="Heck A.J."/>
            <person name="Mohammed S."/>
        </authorList>
    </citation>
    <scope>PHOSPHORYLATION [LARGE SCALE ANALYSIS] AT SER-216</scope>
    <scope>IDENTIFICATION BY MASS SPECTROMETRY [LARGE SCALE ANALYSIS]</scope>
    <source>
        <tissue>Erythroleukemia</tissue>
    </source>
</reference>
<reference key="12">
    <citation type="journal article" date="2014" name="Mol. Cell. Proteomics">
        <title>Immunoaffinity enrichment and mass spectrometry analysis of protein methylation.</title>
        <authorList>
            <person name="Guo A."/>
            <person name="Gu H."/>
            <person name="Zhou J."/>
            <person name="Mulhern D."/>
            <person name="Wang Y."/>
            <person name="Lee K.A."/>
            <person name="Yang V."/>
            <person name="Aguiar M."/>
            <person name="Kornhauser J."/>
            <person name="Jia X."/>
            <person name="Ren J."/>
            <person name="Beausoleil S.A."/>
            <person name="Silva J.C."/>
            <person name="Vemulapalli V."/>
            <person name="Bedford M.T."/>
            <person name="Comb M.J."/>
        </authorList>
    </citation>
    <scope>METHYLATION [LARGE SCALE ANALYSIS] AT LYS-219</scope>
    <scope>IDENTIFICATION BY MASS SPECTROMETRY [LARGE SCALE ANALYSIS]</scope>
    <source>
        <tissue>Colon carcinoma</tissue>
    </source>
</reference>
<reference key="13">
    <citation type="journal article" date="2017" name="Nat. Struct. Mol. Biol.">
        <title>Site-specific mapping of the human SUMO proteome reveals co-modification with phosphorylation.</title>
        <authorList>
            <person name="Hendriks I.A."/>
            <person name="Lyon D."/>
            <person name="Young C."/>
            <person name="Jensen L.J."/>
            <person name="Vertegaal A.C."/>
            <person name="Nielsen M.L."/>
        </authorList>
    </citation>
    <scope>SUMOYLATION [LARGE SCALE ANALYSIS] AT LYS-150</scope>
    <scope>IDENTIFICATION BY MASS SPECTROMETRY [LARGE SCALE ANALYSIS]</scope>
</reference>
<dbReference type="EMBL" id="D85939">
    <property type="protein sequence ID" value="BAA20069.1"/>
    <property type="molecule type" value="mRNA"/>
</dbReference>
<dbReference type="EMBL" id="D86549">
    <property type="protein sequence ID" value="BAA20070.1"/>
    <property type="molecule type" value="mRNA"/>
</dbReference>
<dbReference type="EMBL" id="AB004907">
    <property type="protein sequence ID" value="BAA31860.1"/>
    <property type="molecule type" value="Genomic_DNA"/>
</dbReference>
<dbReference type="EMBL" id="AB009269">
    <property type="protein sequence ID" value="BAA31864.1"/>
    <property type="molecule type" value="Genomic_DNA"/>
</dbReference>
<dbReference type="EMBL" id="AB009270">
    <property type="protein sequence ID" value="BAA31865.1"/>
    <property type="molecule type" value="Genomic_DNA"/>
</dbReference>
<dbReference type="EMBL" id="AB009285">
    <property type="protein sequence ID" value="BAA31867.1"/>
    <property type="molecule type" value="mRNA"/>
</dbReference>
<dbReference type="EMBL" id="BT009819">
    <property type="protein sequence ID" value="AAP88821.1"/>
    <property type="molecule type" value="mRNA"/>
</dbReference>
<dbReference type="EMBL" id="CR542111">
    <property type="protein sequence ID" value="CAG46908.1"/>
    <property type="molecule type" value="mRNA"/>
</dbReference>
<dbReference type="EMBL" id="BC000991">
    <property type="protein sequence ID" value="AAH00991.1"/>
    <property type="molecule type" value="mRNA"/>
</dbReference>
<dbReference type="CCDS" id="CCDS10916.1">
    <molecule id="Q9UEE9-1"/>
</dbReference>
<dbReference type="RefSeq" id="NP_006315.1">
    <molecule id="Q9UEE9-1"/>
    <property type="nucleotide sequence ID" value="NM_006324.3"/>
</dbReference>
<dbReference type="SMR" id="Q9UEE9"/>
<dbReference type="BioGRID" id="115697">
    <property type="interactions" value="88"/>
</dbReference>
<dbReference type="FunCoup" id="Q9UEE9">
    <property type="interactions" value="2000"/>
</dbReference>
<dbReference type="IntAct" id="Q9UEE9">
    <property type="interactions" value="40"/>
</dbReference>
<dbReference type="MINT" id="Q9UEE9"/>
<dbReference type="STRING" id="9606.ENSP00000283882"/>
<dbReference type="GlyGen" id="Q9UEE9">
    <property type="glycosylation" value="2 sites, 1 O-linked glycan (2 sites)"/>
</dbReference>
<dbReference type="iPTMnet" id="Q9UEE9"/>
<dbReference type="MetOSite" id="Q9UEE9"/>
<dbReference type="PhosphoSitePlus" id="Q9UEE9"/>
<dbReference type="BioMuta" id="CFDP1"/>
<dbReference type="DMDM" id="74734998"/>
<dbReference type="jPOST" id="Q9UEE9"/>
<dbReference type="MassIVE" id="Q9UEE9"/>
<dbReference type="PaxDb" id="9606-ENSP00000283882"/>
<dbReference type="PeptideAtlas" id="Q9UEE9"/>
<dbReference type="ProteomicsDB" id="84142">
    <molecule id="Q9UEE9-1"/>
</dbReference>
<dbReference type="ProteomicsDB" id="84143">
    <molecule id="Q9UEE9-2"/>
</dbReference>
<dbReference type="Pumba" id="Q9UEE9"/>
<dbReference type="Antibodypedia" id="30309">
    <property type="antibodies" value="274 antibodies from 26 providers"/>
</dbReference>
<dbReference type="DNASU" id="10428"/>
<dbReference type="Ensembl" id="ENST00000283882.4">
    <molecule id="Q9UEE9-1"/>
    <property type="protein sequence ID" value="ENSP00000283882.3"/>
    <property type="gene ID" value="ENSG00000153774.9"/>
</dbReference>
<dbReference type="GeneID" id="10428"/>
<dbReference type="KEGG" id="hsa:10428"/>
<dbReference type="MANE-Select" id="ENST00000283882.4">
    <property type="protein sequence ID" value="ENSP00000283882.3"/>
    <property type="RefSeq nucleotide sequence ID" value="NM_006324.3"/>
    <property type="RefSeq protein sequence ID" value="NP_006315.1"/>
</dbReference>
<dbReference type="UCSC" id="uc002fdy.4">
    <molecule id="Q9UEE9-1"/>
    <property type="organism name" value="human"/>
</dbReference>
<dbReference type="AGR" id="HGNC:1873"/>
<dbReference type="CTD" id="10428"/>
<dbReference type="DisGeNET" id="10428"/>
<dbReference type="GeneCards" id="CFDP1"/>
<dbReference type="HGNC" id="HGNC:1873">
    <property type="gene designation" value="CFDP1"/>
</dbReference>
<dbReference type="HPA" id="ENSG00000153774">
    <property type="expression patterns" value="Low tissue specificity"/>
</dbReference>
<dbReference type="MalaCards" id="CFDP1"/>
<dbReference type="MIM" id="608108">
    <property type="type" value="gene"/>
</dbReference>
<dbReference type="neXtProt" id="NX_Q9UEE9"/>
<dbReference type="OpenTargets" id="ENSG00000153774"/>
<dbReference type="PharmGKB" id="PA26422"/>
<dbReference type="VEuPathDB" id="HostDB:ENSG00000153774"/>
<dbReference type="eggNOG" id="KOG4776">
    <property type="taxonomic scope" value="Eukaryota"/>
</dbReference>
<dbReference type="GeneTree" id="ENSGT00390000018141"/>
<dbReference type="HOGENOM" id="CLU_080190_0_0_1"/>
<dbReference type="InParanoid" id="Q9UEE9"/>
<dbReference type="OMA" id="LDWAAYV"/>
<dbReference type="OrthoDB" id="445677at2759"/>
<dbReference type="PAN-GO" id="Q9UEE9">
    <property type="GO annotations" value="3 GO annotations based on evolutionary models"/>
</dbReference>
<dbReference type="PhylomeDB" id="Q9UEE9"/>
<dbReference type="TreeFam" id="TF313182"/>
<dbReference type="PathwayCommons" id="Q9UEE9"/>
<dbReference type="SignaLink" id="Q9UEE9"/>
<dbReference type="BioGRID-ORCS" id="10428">
    <property type="hits" value="362 hits in 1165 CRISPR screens"/>
</dbReference>
<dbReference type="ChiTaRS" id="CFDP1">
    <property type="organism name" value="human"/>
</dbReference>
<dbReference type="GeneWiki" id="CFDP1"/>
<dbReference type="GenomeRNAi" id="10428"/>
<dbReference type="Pharos" id="Q9UEE9">
    <property type="development level" value="Tbio"/>
</dbReference>
<dbReference type="PRO" id="PR:Q9UEE9"/>
<dbReference type="Proteomes" id="UP000005640">
    <property type="component" value="Chromosome 16"/>
</dbReference>
<dbReference type="RNAct" id="Q9UEE9">
    <property type="molecule type" value="protein"/>
</dbReference>
<dbReference type="Bgee" id="ENSG00000153774">
    <property type="expression patterns" value="Expressed in ganglionic eminence and 210 other cell types or tissues"/>
</dbReference>
<dbReference type="ExpressionAtlas" id="Q9UEE9">
    <property type="expression patterns" value="baseline and differential"/>
</dbReference>
<dbReference type="GO" id="GO:0000776">
    <property type="term" value="C:kinetochore"/>
    <property type="evidence" value="ECO:0007669"/>
    <property type="project" value="UniProtKB-KW"/>
</dbReference>
<dbReference type="GO" id="GO:0000812">
    <property type="term" value="C:Swr1 complex"/>
    <property type="evidence" value="ECO:0000318"/>
    <property type="project" value="GO_Central"/>
</dbReference>
<dbReference type="GO" id="GO:0007155">
    <property type="term" value="P:cell adhesion"/>
    <property type="evidence" value="ECO:0007669"/>
    <property type="project" value="Ensembl"/>
</dbReference>
<dbReference type="GO" id="GO:0006338">
    <property type="term" value="P:chromatin remodeling"/>
    <property type="evidence" value="ECO:0000318"/>
    <property type="project" value="GO_Central"/>
</dbReference>
<dbReference type="GO" id="GO:0044346">
    <property type="term" value="P:fibroblast apoptotic process"/>
    <property type="evidence" value="ECO:0007669"/>
    <property type="project" value="Ensembl"/>
</dbReference>
<dbReference type="GO" id="GO:2000270">
    <property type="term" value="P:negative regulation of fibroblast apoptotic process"/>
    <property type="evidence" value="ECO:0007669"/>
    <property type="project" value="Ensembl"/>
</dbReference>
<dbReference type="GO" id="GO:0042127">
    <property type="term" value="P:regulation of cell population proliferation"/>
    <property type="evidence" value="ECO:0007669"/>
    <property type="project" value="Ensembl"/>
</dbReference>
<dbReference type="GO" id="GO:0008360">
    <property type="term" value="P:regulation of cell shape"/>
    <property type="evidence" value="ECO:0007669"/>
    <property type="project" value="Ensembl"/>
</dbReference>
<dbReference type="InterPro" id="IPR011421">
    <property type="entry name" value="BCNT-C"/>
</dbReference>
<dbReference type="InterPro" id="IPR027124">
    <property type="entry name" value="Swc5/CFDP1/2"/>
</dbReference>
<dbReference type="PANTHER" id="PTHR48407">
    <property type="entry name" value="CRANIOFACIAL DEVELOPMENT PROTEIN 1"/>
    <property type="match status" value="1"/>
</dbReference>
<dbReference type="PANTHER" id="PTHR48407:SF1">
    <property type="entry name" value="CRANIOFACIAL DEVELOPMENT PROTEIN 1"/>
    <property type="match status" value="1"/>
</dbReference>
<dbReference type="Pfam" id="PF07572">
    <property type="entry name" value="BCNT"/>
    <property type="match status" value="1"/>
</dbReference>
<dbReference type="PROSITE" id="PS51279">
    <property type="entry name" value="BCNT_C"/>
    <property type="match status" value="1"/>
</dbReference>
<organism>
    <name type="scientific">Homo sapiens</name>
    <name type="common">Human</name>
    <dbReference type="NCBI Taxonomy" id="9606"/>
    <lineage>
        <taxon>Eukaryota</taxon>
        <taxon>Metazoa</taxon>
        <taxon>Chordata</taxon>
        <taxon>Craniata</taxon>
        <taxon>Vertebrata</taxon>
        <taxon>Euteleostomi</taxon>
        <taxon>Mammalia</taxon>
        <taxon>Eutheria</taxon>
        <taxon>Euarchontoglires</taxon>
        <taxon>Primates</taxon>
        <taxon>Haplorrhini</taxon>
        <taxon>Catarrhini</taxon>
        <taxon>Hominidae</taxon>
        <taxon>Homo</taxon>
    </lineage>
</organism>
<proteinExistence type="evidence at protein level"/>
<name>CFDP1_HUMAN</name>
<comment type="function">
    <text evidence="1">May play a role during embryogenesis.</text>
</comment>
<comment type="subcellular location">
    <subcellularLocation>
        <location evidence="6">Chromosome</location>
        <location evidence="6">Centromere</location>
        <location evidence="6">Kinetochore</location>
    </subcellularLocation>
</comment>
<comment type="alternative products">
    <event type="alternative splicing"/>
    <isoform>
        <id>Q9UEE9-1</id>
        <name>1</name>
        <sequence type="displayed"/>
    </isoform>
    <isoform>
        <id>Q9UEE9-2</id>
        <name>2</name>
        <sequence type="described" ref="VSP_016242"/>
    </isoform>
</comment>
<comment type="tissue specificity">
    <text evidence="7">Ubiquitous.</text>
</comment>
<comment type="PTM">
    <text evidence="5">Phosphorylated by CK2 (casein kinase II) in vitro.</text>
</comment>
<accession>Q9UEE9</accession>
<accession>O00393</accession>
<accession>O00404</accession>
<accession>Q9UEF0</accession>
<accession>Q9UEF1</accession>
<accession>Q9UEF8</accession>
<keyword id="KW-0025">Alternative splicing</keyword>
<keyword id="KW-0137">Centromere</keyword>
<keyword id="KW-0158">Chromosome</keyword>
<keyword id="KW-0217">Developmental protein</keyword>
<keyword id="KW-1017">Isopeptide bond</keyword>
<keyword id="KW-0995">Kinetochore</keyword>
<keyword id="KW-0488">Methylation</keyword>
<keyword id="KW-0597">Phosphoprotein</keyword>
<keyword id="KW-1267">Proteomics identification</keyword>
<keyword id="KW-1185">Reference proteome</keyword>
<keyword id="KW-0832">Ubl conjugation</keyword>
<evidence type="ECO:0000250" key="1"/>
<evidence type="ECO:0000250" key="2">
    <source>
        <dbReference type="UniProtKB" id="Q75UQ2"/>
    </source>
</evidence>
<evidence type="ECO:0000255" key="3">
    <source>
        <dbReference type="PROSITE-ProRule" id="PRU00610"/>
    </source>
</evidence>
<evidence type="ECO:0000256" key="4">
    <source>
        <dbReference type="SAM" id="MobiDB-lite"/>
    </source>
</evidence>
<evidence type="ECO:0000269" key="5">
    <source>
    </source>
</evidence>
<evidence type="ECO:0000269" key="6">
    <source>
    </source>
</evidence>
<evidence type="ECO:0000269" key="7">
    <source>
    </source>
</evidence>
<evidence type="ECO:0000303" key="8">
    <source>
    </source>
</evidence>
<evidence type="ECO:0000305" key="9"/>
<evidence type="ECO:0007744" key="10">
    <source>
    </source>
</evidence>
<evidence type="ECO:0007744" key="11">
    <source>
    </source>
</evidence>
<evidence type="ECO:0007744" key="12">
    <source>
    </source>
</evidence>
<evidence type="ECO:0007744" key="13">
    <source>
    </source>
</evidence>
<evidence type="ECO:0007744" key="14">
    <source>
    </source>
</evidence>